<gene>
    <name evidence="1" type="primary">hscB</name>
    <name type="ordered locus">RPR_01960</name>
</gene>
<name>HSCB_RICPU</name>
<organism>
    <name type="scientific">Rickettsia peacockii (strain Rustic)</name>
    <dbReference type="NCBI Taxonomy" id="562019"/>
    <lineage>
        <taxon>Bacteria</taxon>
        <taxon>Pseudomonadati</taxon>
        <taxon>Pseudomonadota</taxon>
        <taxon>Alphaproteobacteria</taxon>
        <taxon>Rickettsiales</taxon>
        <taxon>Rickettsiaceae</taxon>
        <taxon>Rickettsieae</taxon>
        <taxon>Rickettsia</taxon>
        <taxon>spotted fever group</taxon>
    </lineage>
</organism>
<dbReference type="EMBL" id="CP001227">
    <property type="protein sequence ID" value="ACR47247.1"/>
    <property type="molecule type" value="Genomic_DNA"/>
</dbReference>
<dbReference type="RefSeq" id="WP_012736524.1">
    <property type="nucleotide sequence ID" value="NC_012730.1"/>
</dbReference>
<dbReference type="SMR" id="C4K0Z6"/>
<dbReference type="KEGG" id="rpk:RPR_01960"/>
<dbReference type="HOGENOM" id="CLU_068529_2_0_5"/>
<dbReference type="Proteomes" id="UP000005015">
    <property type="component" value="Chromosome"/>
</dbReference>
<dbReference type="GO" id="GO:0001671">
    <property type="term" value="F:ATPase activator activity"/>
    <property type="evidence" value="ECO:0007669"/>
    <property type="project" value="InterPro"/>
</dbReference>
<dbReference type="GO" id="GO:0051087">
    <property type="term" value="F:protein-folding chaperone binding"/>
    <property type="evidence" value="ECO:0007669"/>
    <property type="project" value="InterPro"/>
</dbReference>
<dbReference type="GO" id="GO:0044571">
    <property type="term" value="P:[2Fe-2S] cluster assembly"/>
    <property type="evidence" value="ECO:0007669"/>
    <property type="project" value="InterPro"/>
</dbReference>
<dbReference type="GO" id="GO:0051259">
    <property type="term" value="P:protein complex oligomerization"/>
    <property type="evidence" value="ECO:0007669"/>
    <property type="project" value="InterPro"/>
</dbReference>
<dbReference type="GO" id="GO:0006457">
    <property type="term" value="P:protein folding"/>
    <property type="evidence" value="ECO:0007669"/>
    <property type="project" value="UniProtKB-UniRule"/>
</dbReference>
<dbReference type="CDD" id="cd06257">
    <property type="entry name" value="DnaJ"/>
    <property type="match status" value="1"/>
</dbReference>
<dbReference type="Gene3D" id="1.10.287.110">
    <property type="entry name" value="DnaJ domain"/>
    <property type="match status" value="1"/>
</dbReference>
<dbReference type="HAMAP" id="MF_00682">
    <property type="entry name" value="HscB"/>
    <property type="match status" value="1"/>
</dbReference>
<dbReference type="InterPro" id="IPR001623">
    <property type="entry name" value="DnaJ_domain"/>
</dbReference>
<dbReference type="InterPro" id="IPR004640">
    <property type="entry name" value="HscB"/>
</dbReference>
<dbReference type="InterPro" id="IPR036386">
    <property type="entry name" value="HscB_C_sf"/>
</dbReference>
<dbReference type="InterPro" id="IPR009073">
    <property type="entry name" value="HscB_oligo_C"/>
</dbReference>
<dbReference type="InterPro" id="IPR036869">
    <property type="entry name" value="J_dom_sf"/>
</dbReference>
<dbReference type="NCBIfam" id="TIGR00714">
    <property type="entry name" value="hscB"/>
    <property type="match status" value="1"/>
</dbReference>
<dbReference type="PANTHER" id="PTHR14021">
    <property type="entry name" value="IRON-SULFUR CLUSTER CO-CHAPERONE PROTEIN HSCB"/>
    <property type="match status" value="1"/>
</dbReference>
<dbReference type="PANTHER" id="PTHR14021:SF15">
    <property type="entry name" value="IRON-SULFUR CLUSTER CO-CHAPERONE PROTEIN HSCB"/>
    <property type="match status" value="1"/>
</dbReference>
<dbReference type="Pfam" id="PF00226">
    <property type="entry name" value="DnaJ"/>
    <property type="match status" value="1"/>
</dbReference>
<dbReference type="Pfam" id="PF07743">
    <property type="entry name" value="HSCB_C"/>
    <property type="match status" value="1"/>
</dbReference>
<dbReference type="SMART" id="SM00271">
    <property type="entry name" value="DnaJ"/>
    <property type="match status" value="1"/>
</dbReference>
<dbReference type="SUPFAM" id="SSF46565">
    <property type="entry name" value="Chaperone J-domain"/>
    <property type="match status" value="1"/>
</dbReference>
<dbReference type="SUPFAM" id="SSF47144">
    <property type="entry name" value="HSC20 (HSCB), C-terminal oligomerisation domain"/>
    <property type="match status" value="1"/>
</dbReference>
<dbReference type="PROSITE" id="PS50076">
    <property type="entry name" value="DNAJ_2"/>
    <property type="match status" value="1"/>
</dbReference>
<reference key="1">
    <citation type="journal article" date="2009" name="PLoS ONE">
        <title>Genome sequence of the endosymbiont Rickettsia peacockii and comparison with virulent Rickettsia rickettsii: identification of virulence factors.</title>
        <authorList>
            <person name="Felsheim R.F."/>
            <person name="Kurtti T.J."/>
            <person name="Munderloh U.G."/>
        </authorList>
    </citation>
    <scope>NUCLEOTIDE SEQUENCE [LARGE SCALE GENOMIC DNA]</scope>
    <source>
        <strain>Rustic</strain>
    </source>
</reference>
<comment type="function">
    <text evidence="1">Co-chaperone involved in the maturation of iron-sulfur cluster-containing proteins. Seems to help targeting proteins to be folded toward HscA.</text>
</comment>
<comment type="subunit">
    <text evidence="1">Interacts with HscA and stimulates its ATPase activity.</text>
</comment>
<comment type="similarity">
    <text evidence="1">Belongs to the HscB family.</text>
</comment>
<keyword id="KW-0143">Chaperone</keyword>
<proteinExistence type="inferred from homology"/>
<sequence>MQNYFQLLGLPQKYNINLKILEKQYFAMQVKYHPDKAKTLQEKEQNLITAAELNNAYSTLKDALKRAEYMLLLQNINLNDEKTRSLLSPLELSIFWDEMEIIENTILFSDLEKIKDKYELMKKLEIDSLKQAFEEQNLSDATIKTSKLKYIGTLLHKLQEKIKSCK</sequence>
<feature type="chain" id="PRO_1000212544" description="Co-chaperone protein HscB homolog">
    <location>
        <begin position="1"/>
        <end position="166"/>
    </location>
</feature>
<feature type="domain" description="J" evidence="1">
    <location>
        <begin position="3"/>
        <end position="73"/>
    </location>
</feature>
<protein>
    <recommendedName>
        <fullName evidence="1">Co-chaperone protein HscB homolog</fullName>
    </recommendedName>
</protein>
<evidence type="ECO:0000255" key="1">
    <source>
        <dbReference type="HAMAP-Rule" id="MF_00682"/>
    </source>
</evidence>
<accession>C4K0Z6</accession>